<keyword id="KW-0027">Amidation</keyword>
<keyword id="KW-0903">Direct protein sequencing</keyword>
<comment type="tissue specificity">
    <text evidence="1">Found in the abdominal ganglia and perisympathetic organs. Not detected in the thoracic ganglia, subesophageal ganglion, corpora cardiaca, corpora allata, hypocerebral ganglion or frontal ganglion.</text>
</comment>
<comment type="mass spectrometry" mass="1152.7" method="MALDI" evidence="1"/>
<accession>P85863</accession>
<proteinExistence type="evidence at protein level"/>
<sequence length="10" mass="1154">TSSLFPHPRL</sequence>
<organism>
    <name type="scientific">Schistocerca gregaria</name>
    <name type="common">Desert locust</name>
    <name type="synonym">Gryllus gregarius</name>
    <dbReference type="NCBI Taxonomy" id="7010"/>
    <lineage>
        <taxon>Eukaryota</taxon>
        <taxon>Metazoa</taxon>
        <taxon>Ecdysozoa</taxon>
        <taxon>Arthropoda</taxon>
        <taxon>Hexapoda</taxon>
        <taxon>Insecta</taxon>
        <taxon>Pterygota</taxon>
        <taxon>Neoptera</taxon>
        <taxon>Polyneoptera</taxon>
        <taxon>Orthoptera</taxon>
        <taxon>Caelifera</taxon>
        <taxon>Acrididea</taxon>
        <taxon>Acridomorpha</taxon>
        <taxon>Acridoidea</taxon>
        <taxon>Acrididae</taxon>
        <taxon>Cyrtacanthacridinae</taxon>
        <taxon>Schistocerca</taxon>
    </lineage>
</organism>
<protein>
    <recommendedName>
        <fullName>Myotropin-2</fullName>
    </recommendedName>
    <alternativeName>
        <fullName>Scg-MT-2</fullName>
    </alternativeName>
</protein>
<reference evidence="2" key="1">
    <citation type="journal article" date="2003" name="Biochem. Biophys. Res. Commun.">
        <title>Mass spectrometric analysis of the perisympathetic organs in locusts: identification of novel periviscerokinins.</title>
        <authorList>
            <person name="Clynen E."/>
            <person name="Huybrechts J."/>
            <person name="De Loof A."/>
            <person name="Schoofs L."/>
        </authorList>
    </citation>
    <scope>PROTEIN SEQUENCE</scope>
    <scope>TISSUE SPECIFICITY</scope>
    <scope>MASS SPECTROMETRY</scope>
    <scope>AMIDATION AT LEU-10</scope>
    <source>
        <tissue evidence="1">Abdominal perisympathetic organs</tissue>
    </source>
</reference>
<feature type="peptide" id="PRO_0000343526" description="Myotropin-2" evidence="1">
    <location>
        <begin position="1"/>
        <end position="10"/>
    </location>
</feature>
<feature type="modified residue" description="Leucine amide" evidence="1">
    <location>
        <position position="10"/>
    </location>
</feature>
<evidence type="ECO:0000269" key="1">
    <source>
    </source>
</evidence>
<evidence type="ECO:0000305" key="2"/>
<name>MYOT2_SCHGR</name>